<evidence type="ECO:0000255" key="1">
    <source>
        <dbReference type="HAMAP-Rule" id="MF_00650"/>
    </source>
</evidence>
<evidence type="ECO:0000305" key="2"/>
<reference key="1">
    <citation type="journal article" date="2000" name="Nature">
        <title>Complete genome sequence of Pseudomonas aeruginosa PAO1, an opportunistic pathogen.</title>
        <authorList>
            <person name="Stover C.K."/>
            <person name="Pham X.-Q.T."/>
            <person name="Erwin A.L."/>
            <person name="Mizoguchi S.D."/>
            <person name="Warrener P."/>
            <person name="Hickey M.J."/>
            <person name="Brinkman F.S.L."/>
            <person name="Hufnagle W.O."/>
            <person name="Kowalik D.J."/>
            <person name="Lagrou M."/>
            <person name="Garber R.L."/>
            <person name="Goltry L."/>
            <person name="Tolentino E."/>
            <person name="Westbrock-Wadman S."/>
            <person name="Yuan Y."/>
            <person name="Brody L.L."/>
            <person name="Coulter S.N."/>
            <person name="Folger K.R."/>
            <person name="Kas A."/>
            <person name="Larbig K."/>
            <person name="Lim R.M."/>
            <person name="Smith K.A."/>
            <person name="Spencer D.H."/>
            <person name="Wong G.K.-S."/>
            <person name="Wu Z."/>
            <person name="Paulsen I.T."/>
            <person name="Reizer J."/>
            <person name="Saier M.H. Jr."/>
            <person name="Hancock R.E.W."/>
            <person name="Lory S."/>
            <person name="Olson M.V."/>
        </authorList>
    </citation>
    <scope>NUCLEOTIDE SEQUENCE [LARGE SCALE GENOMIC DNA]</scope>
    <source>
        <strain>ATCC 15692 / DSM 22644 / CIP 104116 / JCM 14847 / LMG 12228 / 1C / PRS 101 / PAO1</strain>
    </source>
</reference>
<name>MDCG_PSEAE</name>
<organism>
    <name type="scientific">Pseudomonas aeruginosa (strain ATCC 15692 / DSM 22644 / CIP 104116 / JCM 14847 / LMG 12228 / 1C / PRS 101 / PAO1)</name>
    <dbReference type="NCBI Taxonomy" id="208964"/>
    <lineage>
        <taxon>Bacteria</taxon>
        <taxon>Pseudomonadati</taxon>
        <taxon>Pseudomonadota</taxon>
        <taxon>Gammaproteobacteria</taxon>
        <taxon>Pseudomonadales</taxon>
        <taxon>Pseudomonadaceae</taxon>
        <taxon>Pseudomonas</taxon>
    </lineage>
</organism>
<feature type="chain" id="PRO_0000220294" description="Phosphoribosyl-dephospho-CoA transferase">
    <location>
        <begin position="1"/>
        <end position="210"/>
    </location>
</feature>
<feature type="active site" evidence="1">
    <location>
        <position position="135"/>
    </location>
</feature>
<feature type="active site" evidence="1">
    <location>
        <position position="137"/>
    </location>
</feature>
<gene>
    <name evidence="1" type="primary">mdcG</name>
    <name type="ordered locus">PA0213</name>
</gene>
<comment type="function">
    <text evidence="1">Transfers 2'-(5-triphosphoribosyl)-3'-dephosphocoenzyme-A to the apo-[acyl-carrier-protein] of the malonate decarboxylase to yield holo-[acyl-carrier-protein].</text>
</comment>
<comment type="catalytic activity">
    <reaction evidence="1">
        <text>apo-[malonate decarboxylase ACP] + 2'-(5''-triphospho-alpha-D-ribosyl)-3'-dephospho-CoA = holo-[malonate decarboxylase ACP] + diphosphate</text>
        <dbReference type="Rhea" id="RHEA:42644"/>
        <dbReference type="Rhea" id="RHEA-COMP:10160"/>
        <dbReference type="Rhea" id="RHEA-COMP:10161"/>
        <dbReference type="ChEBI" id="CHEBI:29999"/>
        <dbReference type="ChEBI" id="CHEBI:33019"/>
        <dbReference type="ChEBI" id="CHEBI:61378"/>
        <dbReference type="ChEBI" id="CHEBI:82683"/>
        <dbReference type="EC" id="2.7.7.66"/>
    </reaction>
</comment>
<comment type="similarity">
    <text evidence="1">Belongs to the MdcG family.</text>
</comment>
<comment type="sequence caution" evidence="2">
    <conflict type="erroneous initiation">
        <sequence resource="EMBL-CDS" id="AAG03602"/>
    </conflict>
</comment>
<protein>
    <recommendedName>
        <fullName evidence="1">Phosphoribosyl-dephospho-CoA transferase</fullName>
        <ecNumber evidence="1">2.7.7.66</ecNumber>
    </recommendedName>
    <alternativeName>
        <fullName evidence="1">Malonate decarboxylase holo-[acyl-carrier-protein] synthase</fullName>
        <shortName evidence="1">Holo-ACP synthase</shortName>
    </alternativeName>
</protein>
<proteinExistence type="inferred from homology"/>
<sequence length="210" mass="23009">MRRRAGPEPHDLLLGMAPAHLPENAPAWVCAALKAGWPVVVRRAPADPARVAIGVRGLAREQRWAGWMPLAAITRRLRPEALGQREPAMLRDLPAWRALRDLRAPLNALGLAWGVTGGAGFELASGVAVLHPDSDLDLLLRTPRPFPRDDALRLLQCFEQCPCRIDLQLQTPAGGVALREWAEGRPRVLAKGSEAPLLLEDPWRIAEVEA</sequence>
<dbReference type="EC" id="2.7.7.66" evidence="1"/>
<dbReference type="EMBL" id="AE004091">
    <property type="protein sequence ID" value="AAG03602.1"/>
    <property type="status" value="ALT_INIT"/>
    <property type="molecule type" value="Genomic_DNA"/>
</dbReference>
<dbReference type="PIR" id="B83619">
    <property type="entry name" value="B83619"/>
</dbReference>
<dbReference type="RefSeq" id="NP_248904.1">
    <property type="nucleotide sequence ID" value="NC_002516.2"/>
</dbReference>
<dbReference type="STRING" id="208964.PA0213"/>
<dbReference type="PaxDb" id="208964-PA0213"/>
<dbReference type="GeneID" id="879254"/>
<dbReference type="KEGG" id="pae:PA0213"/>
<dbReference type="PATRIC" id="fig|208964.12.peg.222"/>
<dbReference type="PseudoCAP" id="PA0213"/>
<dbReference type="HOGENOM" id="CLU_111981_0_0_6"/>
<dbReference type="InParanoid" id="Q9I6S5"/>
<dbReference type="OrthoDB" id="1275217at2"/>
<dbReference type="PhylomeDB" id="Q9I6S5"/>
<dbReference type="Proteomes" id="UP000002438">
    <property type="component" value="Chromosome"/>
</dbReference>
<dbReference type="GO" id="GO:0016779">
    <property type="term" value="F:nucleotidyltransferase activity"/>
    <property type="evidence" value="ECO:0007669"/>
    <property type="project" value="UniProtKB-UniRule"/>
</dbReference>
<dbReference type="HAMAP" id="MF_00650">
    <property type="entry name" value="Malonate_MdcG"/>
    <property type="match status" value="1"/>
</dbReference>
<dbReference type="InterPro" id="IPR017557">
    <property type="entry name" value="Holo-ACP_synthase"/>
</dbReference>
<dbReference type="InterPro" id="IPR049180">
    <property type="entry name" value="MdcG_C"/>
</dbReference>
<dbReference type="InterPro" id="IPR048903">
    <property type="entry name" value="MdcG_N"/>
</dbReference>
<dbReference type="NCBIfam" id="TIGR03135">
    <property type="entry name" value="malonate_mdcG"/>
    <property type="match status" value="1"/>
</dbReference>
<dbReference type="NCBIfam" id="NF002332">
    <property type="entry name" value="PRK01293.1"/>
    <property type="match status" value="1"/>
</dbReference>
<dbReference type="Pfam" id="PF10620">
    <property type="entry name" value="MdcG"/>
    <property type="match status" value="1"/>
</dbReference>
<dbReference type="Pfam" id="PF20866">
    <property type="entry name" value="MdcG_N"/>
    <property type="match status" value="1"/>
</dbReference>
<keyword id="KW-0548">Nucleotidyltransferase</keyword>
<keyword id="KW-1185">Reference proteome</keyword>
<keyword id="KW-0808">Transferase</keyword>
<accession>Q9I6S5</accession>